<dbReference type="EC" id="3.2.1.4"/>
<dbReference type="EMBL" id="X60545">
    <property type="protein sequence ID" value="CAA43035.1"/>
    <property type="molecule type" value="Genomic_DNA"/>
</dbReference>
<dbReference type="EMBL" id="CP000568">
    <property type="protein sequence ID" value="ABN51779.1"/>
    <property type="molecule type" value="Genomic_DNA"/>
</dbReference>
<dbReference type="PIR" id="I40804">
    <property type="entry name" value="I40804"/>
</dbReference>
<dbReference type="PIR" id="S15727">
    <property type="entry name" value="S15727"/>
</dbReference>
<dbReference type="RefSeq" id="WP_003517595.1">
    <property type="nucleotide sequence ID" value="NC_009012.1"/>
</dbReference>
<dbReference type="SMR" id="P26224"/>
<dbReference type="STRING" id="203119.Cthe_0543"/>
<dbReference type="CAZy" id="CBM3">
    <property type="family name" value="Carbohydrate-Binding Module Family 3"/>
</dbReference>
<dbReference type="CAZy" id="GH9">
    <property type="family name" value="Glycoside Hydrolase Family 9"/>
</dbReference>
<dbReference type="GeneID" id="35804292"/>
<dbReference type="KEGG" id="cth:Cthe_0543"/>
<dbReference type="eggNOG" id="COG5297">
    <property type="taxonomic scope" value="Bacteria"/>
</dbReference>
<dbReference type="HOGENOM" id="CLU_008926_0_2_9"/>
<dbReference type="OrthoDB" id="9758662at2"/>
<dbReference type="BioCyc" id="MetaCyc:MONOMER-16419"/>
<dbReference type="Proteomes" id="UP000002145">
    <property type="component" value="Chromosome"/>
</dbReference>
<dbReference type="GO" id="GO:0008810">
    <property type="term" value="F:cellulase activity"/>
    <property type="evidence" value="ECO:0007669"/>
    <property type="project" value="UniProtKB-EC"/>
</dbReference>
<dbReference type="GO" id="GO:0030248">
    <property type="term" value="F:cellulose binding"/>
    <property type="evidence" value="ECO:0007669"/>
    <property type="project" value="InterPro"/>
</dbReference>
<dbReference type="GO" id="GO:0030245">
    <property type="term" value="P:cellulose catabolic process"/>
    <property type="evidence" value="ECO:0007669"/>
    <property type="project" value="UniProtKB-KW"/>
</dbReference>
<dbReference type="CDD" id="cd14256">
    <property type="entry name" value="Dockerin_I"/>
    <property type="match status" value="1"/>
</dbReference>
<dbReference type="FunFam" id="1.50.10.10:FF:000020">
    <property type="entry name" value="Endoglucanase"/>
    <property type="match status" value="1"/>
</dbReference>
<dbReference type="Gene3D" id="1.50.10.10">
    <property type="match status" value="1"/>
</dbReference>
<dbReference type="Gene3D" id="1.10.1330.10">
    <property type="entry name" value="Dockerin domain"/>
    <property type="match status" value="1"/>
</dbReference>
<dbReference type="Gene3D" id="2.60.40.710">
    <property type="entry name" value="Endoglucanase-like"/>
    <property type="match status" value="1"/>
</dbReference>
<dbReference type="InterPro" id="IPR008928">
    <property type="entry name" value="6-hairpin_glycosidase_sf"/>
</dbReference>
<dbReference type="InterPro" id="IPR012341">
    <property type="entry name" value="6hp_glycosidase-like_sf"/>
</dbReference>
<dbReference type="InterPro" id="IPR008965">
    <property type="entry name" value="CBM2/CBM3_carb-bd_dom_sf"/>
</dbReference>
<dbReference type="InterPro" id="IPR001956">
    <property type="entry name" value="CBM3"/>
</dbReference>
<dbReference type="InterPro" id="IPR036966">
    <property type="entry name" value="CBM3_sf"/>
</dbReference>
<dbReference type="InterPro" id="IPR002105">
    <property type="entry name" value="Dockerin_1_rpt"/>
</dbReference>
<dbReference type="InterPro" id="IPR016134">
    <property type="entry name" value="Dockerin_dom"/>
</dbReference>
<dbReference type="InterPro" id="IPR036439">
    <property type="entry name" value="Dockerin_dom_sf"/>
</dbReference>
<dbReference type="InterPro" id="IPR018247">
    <property type="entry name" value="EF_Hand_1_Ca_BS"/>
</dbReference>
<dbReference type="InterPro" id="IPR001701">
    <property type="entry name" value="Glyco_hydro_9"/>
</dbReference>
<dbReference type="InterPro" id="IPR033126">
    <property type="entry name" value="Glyco_hydro_9_Asp/Glu_AS"/>
</dbReference>
<dbReference type="InterPro" id="IPR018221">
    <property type="entry name" value="Glyco_hydro_9_His_AS"/>
</dbReference>
<dbReference type="PANTHER" id="PTHR22298">
    <property type="entry name" value="ENDO-1,4-BETA-GLUCANASE"/>
    <property type="match status" value="1"/>
</dbReference>
<dbReference type="Pfam" id="PF00942">
    <property type="entry name" value="CBM_3"/>
    <property type="match status" value="1"/>
</dbReference>
<dbReference type="Pfam" id="PF00404">
    <property type="entry name" value="Dockerin_1"/>
    <property type="match status" value="1"/>
</dbReference>
<dbReference type="Pfam" id="PF00759">
    <property type="entry name" value="Glyco_hydro_9"/>
    <property type="match status" value="1"/>
</dbReference>
<dbReference type="SMART" id="SM01067">
    <property type="entry name" value="CBM_3"/>
    <property type="match status" value="1"/>
</dbReference>
<dbReference type="SUPFAM" id="SSF49384">
    <property type="entry name" value="Carbohydrate-binding domain"/>
    <property type="match status" value="1"/>
</dbReference>
<dbReference type="SUPFAM" id="SSF48208">
    <property type="entry name" value="Six-hairpin glycosidases"/>
    <property type="match status" value="1"/>
</dbReference>
<dbReference type="SUPFAM" id="SSF63446">
    <property type="entry name" value="Type I dockerin domain"/>
    <property type="match status" value="1"/>
</dbReference>
<dbReference type="PROSITE" id="PS51172">
    <property type="entry name" value="CBM3"/>
    <property type="match status" value="1"/>
</dbReference>
<dbReference type="PROSITE" id="PS00448">
    <property type="entry name" value="CLOS_CELLULOSOME_RPT"/>
    <property type="match status" value="2"/>
</dbReference>
<dbReference type="PROSITE" id="PS51766">
    <property type="entry name" value="DOCKERIN"/>
    <property type="match status" value="1"/>
</dbReference>
<dbReference type="PROSITE" id="PS00018">
    <property type="entry name" value="EF_HAND_1"/>
    <property type="match status" value="1"/>
</dbReference>
<dbReference type="PROSITE" id="PS60032">
    <property type="entry name" value="GH9_1"/>
    <property type="match status" value="1"/>
</dbReference>
<dbReference type="PROSITE" id="PS00592">
    <property type="entry name" value="GH9_2"/>
    <property type="match status" value="1"/>
</dbReference>
<dbReference type="PROSITE" id="PS00698">
    <property type="entry name" value="GH9_3"/>
    <property type="match status" value="1"/>
</dbReference>
<feature type="signal peptide">
    <location>
        <begin position="1"/>
        <end position="27"/>
    </location>
</feature>
<feature type="chain" id="PRO_0000007950" description="Endoglucanase F">
    <location>
        <begin position="28"/>
        <end position="739"/>
    </location>
</feature>
<feature type="domain" description="CBM3" evidence="1">
    <location>
        <begin position="480"/>
        <end position="639"/>
    </location>
</feature>
<feature type="domain" description="Dockerin" evidence="2">
    <location>
        <begin position="664"/>
        <end position="737"/>
    </location>
</feature>
<feature type="region of interest" description="Catalytic">
    <location>
        <begin position="28"/>
        <end position="470"/>
    </location>
</feature>
<feature type="active site" description="Nucleophile" evidence="5">
    <location>
        <position position="84"/>
    </location>
</feature>
<feature type="active site" evidence="3">
    <location>
        <position position="400"/>
    </location>
</feature>
<feature type="active site" evidence="4">
    <location>
        <position position="438"/>
    </location>
</feature>
<feature type="active site" evidence="4">
    <location>
        <position position="447"/>
    </location>
</feature>
<organism>
    <name type="scientific">Acetivibrio thermocellus (strain ATCC 27405 / DSM 1237 / JCM 9322 / NBRC 103400 / NCIMB 10682 / NRRL B-4536 / VPI 7372)</name>
    <name type="common">Clostridium thermocellum</name>
    <dbReference type="NCBI Taxonomy" id="203119"/>
    <lineage>
        <taxon>Bacteria</taxon>
        <taxon>Bacillati</taxon>
        <taxon>Bacillota</taxon>
        <taxon>Clostridia</taxon>
        <taxon>Eubacteriales</taxon>
        <taxon>Oscillospiraceae</taxon>
        <taxon>Acetivibrio</taxon>
    </lineage>
</organism>
<proteinExistence type="inferred from homology"/>
<accession>P26224</accession>
<accession>A3DCV0</accession>
<gene>
    <name type="primary">celF</name>
    <name type="ordered locus">Cthe_0543</name>
</gene>
<protein>
    <recommendedName>
        <fullName>Endoglucanase F</fullName>
        <shortName>EGF</shortName>
        <ecNumber>3.2.1.4</ecNumber>
    </recommendedName>
    <alternativeName>
        <fullName>Cellulase F</fullName>
    </alternativeName>
    <alternativeName>
        <fullName>Endo-1,4-beta-glucanase</fullName>
    </alternativeName>
</protein>
<comment type="function">
    <text>This enzyme catalyzes the endohydrolysis of 1,4-beta-glucosidic linkages in cellulose, lichenin and cereal beta-D-glucans.</text>
</comment>
<comment type="catalytic activity">
    <reaction>
        <text>Endohydrolysis of (1-&gt;4)-beta-D-glucosidic linkages in cellulose, lichenin and cereal beta-D-glucans.</text>
        <dbReference type="EC" id="3.2.1.4"/>
    </reaction>
</comment>
<comment type="cofactor">
    <cofactor>
        <name>Ca(2+)</name>
        <dbReference type="ChEBI" id="CHEBI:29108"/>
    </cofactor>
</comment>
<comment type="similarity">
    <text evidence="5 6">Belongs to the glycosyl hydrolase 9 (cellulase E) family.</text>
</comment>
<sequence length="739" mass="82089">MKKILAFLLTVALVAVVAIPQAVVSFAADFNYGEALQKAIMFYEFQRSGKLPENKRNNWRGDSALNDGADNGLDLTGGWYDAGDHVKFNLPMAYAVTMLAWSVYESRDAYVQSGQLPYILDNIKWATDYFIKCHPSPNVYYYQVGDGALDHSWWGPAEVMQMPRPSFKVDLTNPGSTVVAETAAAMAASSIVFKPTDPEYAATLLRHAKELFTFADTTRSDAGYRAAEGYYSSHSGFYDELTWASIWLYLATGDQSYLDKAESYEPHWERERGTTLISYSWAHCWDNKLYGSLLLLAKITGKSYYKQCIENHLDYWTVGFNGSRVQYTPKGLAYLDRWGSLRYATTQAFLASVYADWSGCDPAKAAVYKEFAKKQVDYALGSTGRSFVVGFGKNPPRNPHHRTAHSSWSALMTEPAECRHILVGALVGGPDGSDSYVDRLDDYQCNEVANDYNAGFVGALAKMYEKYGGEPIPNFVAFETPGEEFYVEAAVNAAGPGFVNIKASIINKSGWPARGSDKLSAKYFVDISEAVAKGITLDQITVQSTTNGGAKVSQLLPWDPDNHIYYVNIDFTGINIFPGGINEYKRDVYFTITAPYGEGNWDNTNDFSFQGLEQGFTSKKTEYIPLYDGNVRVWGKVPDGGSEPDPTPTITVGPTPSVTPTSVPGIMLGDVNFDGRINSTDYSRLKRYVIKSLEFTDPEEHQKFIAAADVDGNGRINSTDLYVLNRYILKLIEKFPAEQ</sequence>
<reference key="1">
    <citation type="journal article" date="1991" name="Res. Microbiol.">
        <title>Nucleotide sequence of the cellulase gene celF of Clostridium thermocellum.</title>
        <authorList>
            <person name="Navarro A."/>
            <person name="Chebrou M.-C."/>
            <person name="Beguin P."/>
            <person name="Aubert J.-P."/>
        </authorList>
    </citation>
    <scope>NUCLEOTIDE SEQUENCE [GENOMIC DNA]</scope>
</reference>
<reference key="2">
    <citation type="submission" date="2007-02" db="EMBL/GenBank/DDBJ databases">
        <title>Complete sequence of Clostridium thermocellum ATCC 27405.</title>
        <authorList>
            <consortium name="US DOE Joint Genome Institute"/>
            <person name="Copeland A."/>
            <person name="Lucas S."/>
            <person name="Lapidus A."/>
            <person name="Barry K."/>
            <person name="Detter J.C."/>
            <person name="Glavina del Rio T."/>
            <person name="Hammon N."/>
            <person name="Israni S."/>
            <person name="Dalin E."/>
            <person name="Tice H."/>
            <person name="Pitluck S."/>
            <person name="Chertkov O."/>
            <person name="Brettin T."/>
            <person name="Bruce D."/>
            <person name="Han C."/>
            <person name="Tapia R."/>
            <person name="Gilna P."/>
            <person name="Schmutz J."/>
            <person name="Larimer F."/>
            <person name="Land M."/>
            <person name="Hauser L."/>
            <person name="Kyrpides N."/>
            <person name="Mikhailova N."/>
            <person name="Wu J.H.D."/>
            <person name="Newcomb M."/>
            <person name="Richardson P."/>
        </authorList>
    </citation>
    <scope>NUCLEOTIDE SEQUENCE [LARGE SCALE GENOMIC DNA]</scope>
    <source>
        <strain>ATCC 27405 / DSM 1237 / JCM 9322 / NBRC 103400 / NCIMB 10682 / NRRL B-4536 / VPI 7372</strain>
    </source>
</reference>
<reference key="3">
    <citation type="journal article" date="1991" name="J. Bacteriol.">
        <title>Transcription of Clostridium thermocellum endoglucanase genes celF and celD.</title>
        <authorList>
            <person name="Mishra S."/>
            <person name="Beguin P."/>
            <person name="Aubert J.-P."/>
        </authorList>
    </citation>
    <scope>NUCLEOTIDE SEQUENCE [GENOMIC DNA] OF 1-4</scope>
</reference>
<evidence type="ECO:0000255" key="1">
    <source>
        <dbReference type="PROSITE-ProRule" id="PRU00513"/>
    </source>
</evidence>
<evidence type="ECO:0000255" key="2">
    <source>
        <dbReference type="PROSITE-ProRule" id="PRU01102"/>
    </source>
</evidence>
<evidence type="ECO:0000255" key="3">
    <source>
        <dbReference type="PROSITE-ProRule" id="PRU10059"/>
    </source>
</evidence>
<evidence type="ECO:0000255" key="4">
    <source>
        <dbReference type="PROSITE-ProRule" id="PRU10060"/>
    </source>
</evidence>
<evidence type="ECO:0000255" key="5">
    <source>
        <dbReference type="PROSITE-ProRule" id="PRU10140"/>
    </source>
</evidence>
<evidence type="ECO:0000305" key="6"/>
<name>GUNF_ACET2</name>
<keyword id="KW-0106">Calcium</keyword>
<keyword id="KW-0119">Carbohydrate metabolism</keyword>
<keyword id="KW-0136">Cellulose degradation</keyword>
<keyword id="KW-0326">Glycosidase</keyword>
<keyword id="KW-0378">Hydrolase</keyword>
<keyword id="KW-0624">Polysaccharide degradation</keyword>
<keyword id="KW-1185">Reference proteome</keyword>
<keyword id="KW-0732">Signal</keyword>